<feature type="chain" id="PRO_0000074532" description="N-alpha-acetyltransferase 10">
    <location>
        <begin position="1"/>
        <end position="235"/>
    </location>
</feature>
<feature type="domain" description="N-acetyltransferase" evidence="1">
    <location>
        <begin position="1"/>
        <end position="152"/>
    </location>
</feature>
<feature type="region of interest" description="Interaction with NAA15" evidence="4">
    <location>
        <begin position="1"/>
        <end position="58"/>
    </location>
</feature>
<feature type="region of interest" description="Disordered" evidence="2">
    <location>
        <begin position="178"/>
        <end position="235"/>
    </location>
</feature>
<feature type="compositionally biased region" description="Basic and acidic residues" evidence="2">
    <location>
        <begin position="193"/>
        <end position="213"/>
    </location>
</feature>
<feature type="modified residue" description="N-acetylmethionine" evidence="29">
    <location>
        <position position="1"/>
    </location>
</feature>
<feature type="modified residue" description="N6-acetyllysine; by autocatalysis" evidence="17">
    <location>
        <position position="136"/>
    </location>
</feature>
<feature type="modified residue" description="Phosphoserine" evidence="27 30 31 32">
    <location>
        <position position="182"/>
    </location>
</feature>
<feature type="modified residue" description="Phosphoserine" evidence="28 32 33">
    <location>
        <position position="186"/>
    </location>
</feature>
<feature type="modified residue" description="Phosphoserine" evidence="28 30 31 32">
    <location>
        <position position="205"/>
    </location>
</feature>
<feature type="modified residue" description="Phosphoserine; by IKKB" evidence="7">
    <location>
        <position position="209"/>
    </location>
</feature>
<feature type="modified residue" description="Phosphoserine" evidence="30">
    <location>
        <position position="213"/>
    </location>
</feature>
<feature type="modified residue" description="Phosphoserine" evidence="30">
    <location>
        <position position="216"/>
    </location>
</feature>
<feature type="splice variant" id="VSP_046205" description="In isoform 2." evidence="22">
    <location>
        <begin position="114"/>
        <end position="128"/>
    </location>
</feature>
<feature type="splice variant" id="VSP_046206" description="In isoform 2." evidence="22">
    <original>Q</original>
    <variation>R</variation>
    <location>
        <position position="129"/>
    </location>
</feature>
<feature type="sequence variant" id="VAR_066652" description="In NATD; reduced N-terminal acetyltransferase activity; impaired interaction with NAA15 and NAA50; does not affect cytoplasmic localization; dbSNP:rs387906701." evidence="11 13">
    <original>S</original>
    <variation>P</variation>
    <location>
        <position position="37"/>
    </location>
</feature>
<feature type="sequence variant" id="VAR_075206" description="In NATD; decreased protein stability; strong decrease in N-terminal acetylation activity in vitro; dbSNP:rs863225427." evidence="15">
    <original>Y</original>
    <variation>S</variation>
    <location>
        <position position="43"/>
    </location>
</feature>
<feature type="sequence variant" id="VAR_082604" description="In NATD; reduced monomeric N-terminal acetyltransferase activity in vitro; dbSNP:rs1603290366." evidence="19">
    <original>R</original>
    <variation>H</variation>
    <location>
        <position position="83"/>
    </location>
</feature>
<feature type="mutagenesis site" description="Loss of its ability to acetylate HSPA1A and HSPA1B." evidence="17">
    <original>K</original>
    <variation>R</variation>
    <location>
        <position position="136"/>
    </location>
</feature>
<feature type="mutagenesis site" description="Abolishes phosphorylation by IKKB and reduces cell growth." evidence="7">
    <original>S</original>
    <variation>A</variation>
    <location>
        <position position="209"/>
    </location>
</feature>
<feature type="strand" evidence="34">
    <location>
        <begin position="2"/>
        <end position="5"/>
    </location>
</feature>
<feature type="helix" evidence="34">
    <location>
        <begin position="8"/>
        <end position="10"/>
    </location>
</feature>
<feature type="helix" evidence="34">
    <location>
        <begin position="11"/>
        <end position="21"/>
    </location>
</feature>
<feature type="helix" evidence="34">
    <location>
        <begin position="28"/>
        <end position="35"/>
    </location>
</feature>
<feature type="helix" evidence="34">
    <location>
        <begin position="39"/>
        <end position="41"/>
    </location>
</feature>
<feature type="strand" evidence="34">
    <location>
        <begin position="43"/>
        <end position="46"/>
    </location>
</feature>
<feature type="strand" evidence="34">
    <location>
        <begin position="52"/>
        <end position="60"/>
    </location>
</feature>
<feature type="strand" evidence="34">
    <location>
        <begin position="65"/>
        <end position="67"/>
    </location>
</feature>
<feature type="strand" evidence="34">
    <location>
        <begin position="70"/>
        <end position="77"/>
    </location>
</feature>
<feature type="helix" evidence="34">
    <location>
        <begin position="79"/>
        <end position="81"/>
    </location>
</feature>
<feature type="strand" evidence="35">
    <location>
        <begin position="83"/>
        <end position="85"/>
    </location>
</feature>
<feature type="helix" evidence="34">
    <location>
        <begin position="86"/>
        <end position="102"/>
    </location>
</feature>
<feature type="strand" evidence="34">
    <location>
        <begin position="105"/>
        <end position="112"/>
    </location>
</feature>
<feature type="helix" evidence="34">
    <location>
        <begin position="116"/>
        <end position="124"/>
    </location>
</feature>
<feature type="strand" evidence="34">
    <location>
        <begin position="129"/>
        <end position="134"/>
    </location>
</feature>
<feature type="strand" evidence="34">
    <location>
        <begin position="144"/>
        <end position="150"/>
    </location>
</feature>
<feature type="helix" evidence="34">
    <location>
        <begin position="152"/>
        <end position="159"/>
    </location>
</feature>
<protein>
    <recommendedName>
        <fullName>N-alpha-acetyltransferase 10</fullName>
        <ecNumber evidence="4 6 13 18">2.3.1.255</ecNumber>
    </recommendedName>
    <alternativeName>
        <fullName>N-terminal acetyltransferase complex ARD1 subunit homolog A</fullName>
        <shortName evidence="21">hARD1</shortName>
    </alternativeName>
    <alternativeName>
        <fullName>NatA catalytic subunit Naa10</fullName>
    </alternativeName>
</protein>
<evidence type="ECO:0000255" key="1">
    <source>
        <dbReference type="PROSITE-ProRule" id="PRU00532"/>
    </source>
</evidence>
<evidence type="ECO:0000256" key="2">
    <source>
        <dbReference type="SAM" id="MobiDB-lite"/>
    </source>
</evidence>
<evidence type="ECO:0000269" key="3">
    <source>
    </source>
</evidence>
<evidence type="ECO:0000269" key="4">
    <source>
    </source>
</evidence>
<evidence type="ECO:0000269" key="5">
    <source>
    </source>
</evidence>
<evidence type="ECO:0000269" key="6">
    <source>
    </source>
</evidence>
<evidence type="ECO:0000269" key="7">
    <source>
    </source>
</evidence>
<evidence type="ECO:0000269" key="8">
    <source>
    </source>
</evidence>
<evidence type="ECO:0000269" key="9">
    <source>
    </source>
</evidence>
<evidence type="ECO:0000269" key="10">
    <source>
    </source>
</evidence>
<evidence type="ECO:0000269" key="11">
    <source>
    </source>
</evidence>
<evidence type="ECO:0000269" key="12">
    <source>
    </source>
</evidence>
<evidence type="ECO:0000269" key="13">
    <source>
    </source>
</evidence>
<evidence type="ECO:0000269" key="14">
    <source>
    </source>
</evidence>
<evidence type="ECO:0000269" key="15">
    <source>
    </source>
</evidence>
<evidence type="ECO:0000269" key="16">
    <source>
    </source>
</evidence>
<evidence type="ECO:0000269" key="17">
    <source>
    </source>
</evidence>
<evidence type="ECO:0000269" key="18">
    <source>
    </source>
</evidence>
<evidence type="ECO:0000269" key="19">
    <source>
    </source>
</evidence>
<evidence type="ECO:0000269" key="20">
    <source>
    </source>
</evidence>
<evidence type="ECO:0000303" key="21">
    <source>
    </source>
</evidence>
<evidence type="ECO:0000305" key="22"/>
<evidence type="ECO:0007744" key="23">
    <source>
        <dbReference type="PDB" id="6C95"/>
    </source>
</evidence>
<evidence type="ECO:0007744" key="24">
    <source>
        <dbReference type="PDB" id="6C9M"/>
    </source>
</evidence>
<evidence type="ECO:0007744" key="25">
    <source>
        <dbReference type="PDB" id="6PPL"/>
    </source>
</evidence>
<evidence type="ECO:0007744" key="26">
    <source>
        <dbReference type="PDB" id="6PW9"/>
    </source>
</evidence>
<evidence type="ECO:0007744" key="27">
    <source>
    </source>
</evidence>
<evidence type="ECO:0007744" key="28">
    <source>
    </source>
</evidence>
<evidence type="ECO:0007744" key="29">
    <source>
    </source>
</evidence>
<evidence type="ECO:0007744" key="30">
    <source>
    </source>
</evidence>
<evidence type="ECO:0007744" key="31">
    <source>
    </source>
</evidence>
<evidence type="ECO:0007744" key="32">
    <source>
    </source>
</evidence>
<evidence type="ECO:0007744" key="33">
    <source>
    </source>
</evidence>
<evidence type="ECO:0007829" key="34">
    <source>
        <dbReference type="PDB" id="6C9M"/>
    </source>
</evidence>
<evidence type="ECO:0007829" key="35">
    <source>
        <dbReference type="PDB" id="6PPL"/>
    </source>
</evidence>
<dbReference type="EC" id="2.3.1.255" evidence="4 6 13 18"/>
<dbReference type="EMBL" id="X77588">
    <property type="protein sequence ID" value="CAA54691.1"/>
    <property type="molecule type" value="mRNA"/>
</dbReference>
<dbReference type="EMBL" id="U52112">
    <property type="status" value="NOT_ANNOTATED_CDS"/>
    <property type="molecule type" value="Genomic_DNA"/>
</dbReference>
<dbReference type="EMBL" id="CH471172">
    <property type="protein sequence ID" value="EAW72774.1"/>
    <property type="molecule type" value="Genomic_DNA"/>
</dbReference>
<dbReference type="EMBL" id="BC000308">
    <property type="protein sequence ID" value="AAH00308.1"/>
    <property type="molecule type" value="mRNA"/>
</dbReference>
<dbReference type="EMBL" id="BC019312">
    <property type="protein sequence ID" value="AAH19312.1"/>
    <property type="molecule type" value="mRNA"/>
</dbReference>
<dbReference type="CCDS" id="CCDS14737.1">
    <molecule id="P41227-1"/>
</dbReference>
<dbReference type="CCDS" id="CCDS59179.1">
    <molecule id="P41227-2"/>
</dbReference>
<dbReference type="PIR" id="I38333">
    <property type="entry name" value="I38333"/>
</dbReference>
<dbReference type="RefSeq" id="NP_001243048.1">
    <molecule id="P41227-2"/>
    <property type="nucleotide sequence ID" value="NM_001256119.2"/>
</dbReference>
<dbReference type="RefSeq" id="NP_003482.1">
    <molecule id="P41227-1"/>
    <property type="nucleotide sequence ID" value="NM_003491.4"/>
</dbReference>
<dbReference type="PDB" id="6C95">
    <property type="method" value="X-ray"/>
    <property type="resolution" value="3.15 A"/>
    <property type="chains" value="B=1-160"/>
</dbReference>
<dbReference type="PDB" id="6C9M">
    <property type="method" value="X-ray"/>
    <property type="resolution" value="2.80 A"/>
    <property type="chains" value="B/D=1-160"/>
</dbReference>
<dbReference type="PDB" id="6PPL">
    <property type="method" value="EM"/>
    <property type="resolution" value="3.02 A"/>
    <property type="chains" value="C=1-235"/>
</dbReference>
<dbReference type="PDB" id="6PW9">
    <property type="method" value="EM"/>
    <property type="resolution" value="4.03 A"/>
    <property type="chains" value="C=1-235"/>
</dbReference>
<dbReference type="PDB" id="9F1B">
    <property type="method" value="EM"/>
    <property type="resolution" value="3.01 A"/>
    <property type="chains" value="DC=1-235"/>
</dbReference>
<dbReference type="PDB" id="9F1C">
    <property type="method" value="EM"/>
    <property type="resolution" value="3.78 A"/>
    <property type="chains" value="DC=1-235"/>
</dbReference>
<dbReference type="PDB" id="9F1D">
    <property type="method" value="EM"/>
    <property type="resolution" value="3.26 A"/>
    <property type="chains" value="DC=1-235"/>
</dbReference>
<dbReference type="PDB" id="9FPZ">
    <property type="method" value="EM"/>
    <property type="resolution" value="2.69 A"/>
    <property type="chains" value="2=2-170"/>
</dbReference>
<dbReference type="PDB" id="9FQ0">
    <property type="method" value="EM"/>
    <property type="resolution" value="4.67 A"/>
    <property type="chains" value="2=2-170"/>
</dbReference>
<dbReference type="PDBsum" id="6C95"/>
<dbReference type="PDBsum" id="6C9M"/>
<dbReference type="PDBsum" id="6PPL"/>
<dbReference type="PDBsum" id="6PW9"/>
<dbReference type="PDBsum" id="9F1B"/>
<dbReference type="PDBsum" id="9F1C"/>
<dbReference type="PDBsum" id="9F1D"/>
<dbReference type="PDBsum" id="9FPZ"/>
<dbReference type="PDBsum" id="9FQ0"/>
<dbReference type="EMDB" id="EMD-20442"/>
<dbReference type="EMDB" id="EMD-20501"/>
<dbReference type="EMDB" id="EMD-50124"/>
<dbReference type="EMDB" id="EMD-50125"/>
<dbReference type="EMDB" id="EMD-50126"/>
<dbReference type="EMDB" id="EMD-50641"/>
<dbReference type="EMDB" id="EMD-50642"/>
<dbReference type="SMR" id="P41227"/>
<dbReference type="BioGRID" id="113881">
    <property type="interactions" value="195"/>
</dbReference>
<dbReference type="ComplexPortal" id="CPX-6271">
    <property type="entry name" value="NatA N-alpha-acetyltransferase complex, NAA10-NAA15 variant"/>
</dbReference>
<dbReference type="ComplexPortal" id="CPX-6272">
    <property type="entry name" value="NatA N-alpha-acetyltransferase complex, NAA10-NAA16 variant"/>
</dbReference>
<dbReference type="CORUM" id="P41227"/>
<dbReference type="FunCoup" id="P41227">
    <property type="interactions" value="1973"/>
</dbReference>
<dbReference type="IntAct" id="P41227">
    <property type="interactions" value="122"/>
</dbReference>
<dbReference type="MINT" id="P41227"/>
<dbReference type="STRING" id="9606.ENSP00000417763"/>
<dbReference type="ChEMBL" id="CHEMBL4630819"/>
<dbReference type="GlyGen" id="P41227">
    <property type="glycosylation" value="1 site, 1 O-linked glycan (1 site)"/>
</dbReference>
<dbReference type="iPTMnet" id="P41227"/>
<dbReference type="MetOSite" id="P41227"/>
<dbReference type="PhosphoSitePlus" id="P41227"/>
<dbReference type="SwissPalm" id="P41227"/>
<dbReference type="BioMuta" id="NAA10"/>
<dbReference type="DMDM" id="728880"/>
<dbReference type="jPOST" id="P41227"/>
<dbReference type="MassIVE" id="P41227"/>
<dbReference type="PaxDb" id="9606-ENSP00000417763"/>
<dbReference type="PeptideAtlas" id="P41227"/>
<dbReference type="ProteomicsDB" id="1523"/>
<dbReference type="ProteomicsDB" id="55435">
    <molecule id="P41227-1"/>
</dbReference>
<dbReference type="Pumba" id="P41227"/>
<dbReference type="TopDownProteomics" id="P41227-1">
    <molecule id="P41227-1"/>
</dbReference>
<dbReference type="Antibodypedia" id="31057">
    <property type="antibodies" value="182 antibodies from 29 providers"/>
</dbReference>
<dbReference type="DNASU" id="8260"/>
<dbReference type="Ensembl" id="ENST00000370009.5">
    <molecule id="P41227-2"/>
    <property type="protein sequence ID" value="ENSP00000359026.1"/>
    <property type="gene ID" value="ENSG00000102030.16"/>
</dbReference>
<dbReference type="Ensembl" id="ENST00000464845.6">
    <molecule id="P41227-1"/>
    <property type="protein sequence ID" value="ENSP00000417763.1"/>
    <property type="gene ID" value="ENSG00000102030.16"/>
</dbReference>
<dbReference type="GeneID" id="8260"/>
<dbReference type="KEGG" id="hsa:8260"/>
<dbReference type="MANE-Select" id="ENST00000464845.6">
    <property type="protein sequence ID" value="ENSP00000417763.1"/>
    <property type="RefSeq nucleotide sequence ID" value="NM_003491.4"/>
    <property type="RefSeq protein sequence ID" value="NP_003482.1"/>
</dbReference>
<dbReference type="UCSC" id="uc004fjm.3">
    <molecule id="P41227-1"/>
    <property type="organism name" value="human"/>
</dbReference>
<dbReference type="AGR" id="HGNC:18704"/>
<dbReference type="CTD" id="8260"/>
<dbReference type="DisGeNET" id="8260"/>
<dbReference type="GeneCards" id="NAA10"/>
<dbReference type="HGNC" id="HGNC:18704">
    <property type="gene designation" value="NAA10"/>
</dbReference>
<dbReference type="HPA" id="ENSG00000102030">
    <property type="expression patterns" value="Low tissue specificity"/>
</dbReference>
<dbReference type="MalaCards" id="NAA10"/>
<dbReference type="MIM" id="300013">
    <property type="type" value="gene"/>
</dbReference>
<dbReference type="MIM" id="300855">
    <property type="type" value="phenotype"/>
</dbReference>
<dbReference type="MIM" id="309800">
    <property type="type" value="phenotype"/>
</dbReference>
<dbReference type="neXtProt" id="NX_P41227"/>
<dbReference type="OpenTargets" id="ENSG00000102030"/>
<dbReference type="Orphanet" id="568">
    <property type="disease" value="Microphthalmia, Lenz type"/>
</dbReference>
<dbReference type="Orphanet" id="276432">
    <property type="disease" value="Ogden syndrome"/>
</dbReference>
<dbReference type="PharmGKB" id="PA38648"/>
<dbReference type="VEuPathDB" id="HostDB:ENSG00000102030"/>
<dbReference type="eggNOG" id="KOG3235">
    <property type="taxonomic scope" value="Eukaryota"/>
</dbReference>
<dbReference type="GeneTree" id="ENSGT00550000074803"/>
<dbReference type="HOGENOM" id="CLU_013985_7_0_1"/>
<dbReference type="InParanoid" id="P41227"/>
<dbReference type="OrthoDB" id="25586at2759"/>
<dbReference type="PAN-GO" id="P41227">
    <property type="GO annotations" value="3 GO annotations based on evolutionary models"/>
</dbReference>
<dbReference type="PhylomeDB" id="P41227"/>
<dbReference type="TreeFam" id="TF300078"/>
<dbReference type="BioCyc" id="MetaCyc:HS02336-MONOMER"/>
<dbReference type="BRENDA" id="2.3.1.255">
    <property type="organism ID" value="2681"/>
</dbReference>
<dbReference type="BRENDA" id="2.3.1.258">
    <property type="organism ID" value="2681"/>
</dbReference>
<dbReference type="BRENDA" id="2.3.1.48">
    <property type="organism ID" value="2681"/>
</dbReference>
<dbReference type="PathwayCommons" id="P41227"/>
<dbReference type="SABIO-RK" id="P41227"/>
<dbReference type="SignaLink" id="P41227"/>
<dbReference type="SIGNOR" id="P41227"/>
<dbReference type="BioGRID-ORCS" id="8260">
    <property type="hits" value="373 hits in 761 CRISPR screens"/>
</dbReference>
<dbReference type="ChiTaRS" id="NAA10">
    <property type="organism name" value="human"/>
</dbReference>
<dbReference type="GeneWiki" id="ARD1A"/>
<dbReference type="GenomeRNAi" id="8260"/>
<dbReference type="Pharos" id="P41227">
    <property type="development level" value="Tbio"/>
</dbReference>
<dbReference type="PRO" id="PR:P41227"/>
<dbReference type="Proteomes" id="UP000005640">
    <property type="component" value="Chromosome X"/>
</dbReference>
<dbReference type="RNAct" id="P41227">
    <property type="molecule type" value="protein"/>
</dbReference>
<dbReference type="Bgee" id="ENSG00000102030">
    <property type="expression patterns" value="Expressed in right hemisphere of cerebellum and 203 other cell types or tissues"/>
</dbReference>
<dbReference type="ExpressionAtlas" id="P41227">
    <property type="expression patterns" value="baseline and differential"/>
</dbReference>
<dbReference type="GO" id="GO:0005737">
    <property type="term" value="C:cytoplasm"/>
    <property type="evidence" value="ECO:0000314"/>
    <property type="project" value="UniProtKB"/>
</dbReference>
<dbReference type="GO" id="GO:0005829">
    <property type="term" value="C:cytosol"/>
    <property type="evidence" value="ECO:0000314"/>
    <property type="project" value="HPA"/>
</dbReference>
<dbReference type="GO" id="GO:0016020">
    <property type="term" value="C:membrane"/>
    <property type="evidence" value="ECO:0007005"/>
    <property type="project" value="UniProtKB"/>
</dbReference>
<dbReference type="GO" id="GO:0031415">
    <property type="term" value="C:NatA complex"/>
    <property type="evidence" value="ECO:0000314"/>
    <property type="project" value="UniProtKB"/>
</dbReference>
<dbReference type="GO" id="GO:0005730">
    <property type="term" value="C:nucleolus"/>
    <property type="evidence" value="ECO:0000314"/>
    <property type="project" value="HPA"/>
</dbReference>
<dbReference type="GO" id="GO:0005634">
    <property type="term" value="C:nucleus"/>
    <property type="evidence" value="ECO:0000314"/>
    <property type="project" value="UniProtKB"/>
</dbReference>
<dbReference type="GO" id="GO:0008080">
    <property type="term" value="F:N-acetyltransferase activity"/>
    <property type="evidence" value="ECO:0000304"/>
    <property type="project" value="ProtInc"/>
</dbReference>
<dbReference type="GO" id="GO:1990189">
    <property type="term" value="F:protein N-terminal-serine acetyltransferase activity"/>
    <property type="evidence" value="ECO:0000318"/>
    <property type="project" value="GO_Central"/>
</dbReference>
<dbReference type="GO" id="GO:0004596">
    <property type="term" value="F:protein-N-terminal amino-acid acetyltransferase activity"/>
    <property type="evidence" value="ECO:0000314"/>
    <property type="project" value="UniProtKB"/>
</dbReference>
<dbReference type="GO" id="GO:0008999">
    <property type="term" value="F:protein-N-terminal-alanine acetyltransferase activity"/>
    <property type="evidence" value="ECO:0007669"/>
    <property type="project" value="RHEA"/>
</dbReference>
<dbReference type="GO" id="GO:1990190">
    <property type="term" value="F:protein-N-terminal-glutamate acetyltransferase activity"/>
    <property type="evidence" value="ECO:0000318"/>
    <property type="project" value="GO_Central"/>
</dbReference>
<dbReference type="GO" id="GO:0051276">
    <property type="term" value="P:chromosome organization"/>
    <property type="evidence" value="ECO:0000304"/>
    <property type="project" value="ProtInc"/>
</dbReference>
<dbReference type="GO" id="GO:0006475">
    <property type="term" value="P:internal protein amino acid acetylation"/>
    <property type="evidence" value="ECO:0000304"/>
    <property type="project" value="ProtInc"/>
</dbReference>
<dbReference type="GO" id="GO:0006474">
    <property type="term" value="P:N-terminal protein amino acid acetylation"/>
    <property type="evidence" value="ECO:0000314"/>
    <property type="project" value="UniProtKB"/>
</dbReference>
<dbReference type="GO" id="GO:2000719">
    <property type="term" value="P:negative regulation of maintenance of mitotic sister chromatid cohesion, centromeric"/>
    <property type="evidence" value="ECO:0000314"/>
    <property type="project" value="UniProtKB"/>
</dbReference>
<dbReference type="GO" id="GO:0006473">
    <property type="term" value="P:protein acetylation"/>
    <property type="evidence" value="ECO:0000314"/>
    <property type="project" value="UniProtKB"/>
</dbReference>
<dbReference type="CDD" id="cd04301">
    <property type="entry name" value="NAT_SF"/>
    <property type="match status" value="1"/>
</dbReference>
<dbReference type="FunFam" id="3.40.630.30:FF:000014">
    <property type="entry name" value="N-alpha-acetyltransferase 10 isoform X1"/>
    <property type="match status" value="1"/>
</dbReference>
<dbReference type="Gene3D" id="3.40.630.30">
    <property type="match status" value="1"/>
</dbReference>
<dbReference type="InterPro" id="IPR016181">
    <property type="entry name" value="Acyl_CoA_acyltransferase"/>
</dbReference>
<dbReference type="InterPro" id="IPR045047">
    <property type="entry name" value="Ard1-like"/>
</dbReference>
<dbReference type="InterPro" id="IPR000182">
    <property type="entry name" value="GNAT_dom"/>
</dbReference>
<dbReference type="PANTHER" id="PTHR23091:SF268">
    <property type="entry name" value="N-ALPHA-ACETYLTRANSFERASE 10"/>
    <property type="match status" value="1"/>
</dbReference>
<dbReference type="PANTHER" id="PTHR23091">
    <property type="entry name" value="N-TERMINAL ACETYLTRANSFERASE"/>
    <property type="match status" value="1"/>
</dbReference>
<dbReference type="Pfam" id="PF00583">
    <property type="entry name" value="Acetyltransf_1"/>
    <property type="match status" value="1"/>
</dbReference>
<dbReference type="SUPFAM" id="SSF55729">
    <property type="entry name" value="Acyl-CoA N-acyltransferases (Nat)"/>
    <property type="match status" value="1"/>
</dbReference>
<dbReference type="PROSITE" id="PS51186">
    <property type="entry name" value="GNAT"/>
    <property type="match status" value="1"/>
</dbReference>
<proteinExistence type="evidence at protein level"/>
<reference key="1">
    <citation type="journal article" date="1994" name="Hum. Mol. Genet.">
        <title>Isolation of new genes in distal Xq28: transcriptional map and identification of a human homologue of the ARD1 N-acetyl transferase of Saccharomyces cerevisiae.</title>
        <authorList>
            <person name="Tribioli C."/>
            <person name="Mancini M."/>
            <person name="Plassart E."/>
            <person name="Bione S."/>
            <person name="Rivella S."/>
            <person name="Sala C."/>
            <person name="Torri G."/>
            <person name="Toniolo D."/>
        </authorList>
    </citation>
    <scope>NUCLEOTIDE SEQUENCE [MRNA] (ISOFORM 1)</scope>
</reference>
<reference key="2">
    <citation type="journal article" date="2005" name="Biochem. J.">
        <title>Identification and characterization of the human ARD1-NATH protein acetyltransferase complex.</title>
        <authorList>
            <person name="Arnesen T."/>
            <person name="Anderson D."/>
            <person name="Baldersheim C."/>
            <person name="Lanotte M."/>
            <person name="Varhaug J.E."/>
            <person name="Lillehaug J.R."/>
        </authorList>
    </citation>
    <scope>NUCLEOTIDE SEQUENCE [MRNA] (ISOFORM 1)</scope>
    <scope>IDENTIFICATION BY MASS SPECTROMETRY</scope>
    <scope>FUNCTION</scope>
    <scope>CATALYTIC ACTIVITY</scope>
    <scope>SUBCELLULAR LOCATION</scope>
    <scope>INTERACTION WITH NAA15 AND RIBOSOMAL PROTEINS</scope>
    <source>
        <tissue>Thyroid carcinoma</tissue>
    </source>
</reference>
<reference key="3">
    <citation type="journal article" date="2005" name="Nature">
        <title>The DNA sequence of the human X chromosome.</title>
        <authorList>
            <person name="Ross M.T."/>
            <person name="Grafham D.V."/>
            <person name="Coffey A.J."/>
            <person name="Scherer S."/>
            <person name="McLay K."/>
            <person name="Muzny D."/>
            <person name="Platzer M."/>
            <person name="Howell G.R."/>
            <person name="Burrows C."/>
            <person name="Bird C.P."/>
            <person name="Frankish A."/>
            <person name="Lovell F.L."/>
            <person name="Howe K.L."/>
            <person name="Ashurst J.L."/>
            <person name="Fulton R.S."/>
            <person name="Sudbrak R."/>
            <person name="Wen G."/>
            <person name="Jones M.C."/>
            <person name="Hurles M.E."/>
            <person name="Andrews T.D."/>
            <person name="Scott C.E."/>
            <person name="Searle S."/>
            <person name="Ramser J."/>
            <person name="Whittaker A."/>
            <person name="Deadman R."/>
            <person name="Carter N.P."/>
            <person name="Hunt S.E."/>
            <person name="Chen R."/>
            <person name="Cree A."/>
            <person name="Gunaratne P."/>
            <person name="Havlak P."/>
            <person name="Hodgson A."/>
            <person name="Metzker M.L."/>
            <person name="Richards S."/>
            <person name="Scott G."/>
            <person name="Steffen D."/>
            <person name="Sodergren E."/>
            <person name="Wheeler D.A."/>
            <person name="Worley K.C."/>
            <person name="Ainscough R."/>
            <person name="Ambrose K.D."/>
            <person name="Ansari-Lari M.A."/>
            <person name="Aradhya S."/>
            <person name="Ashwell R.I."/>
            <person name="Babbage A.K."/>
            <person name="Bagguley C.L."/>
            <person name="Ballabio A."/>
            <person name="Banerjee R."/>
            <person name="Barker G.E."/>
            <person name="Barlow K.F."/>
            <person name="Barrett I.P."/>
            <person name="Bates K.N."/>
            <person name="Beare D.M."/>
            <person name="Beasley H."/>
            <person name="Beasley O."/>
            <person name="Beck A."/>
            <person name="Bethel G."/>
            <person name="Blechschmidt K."/>
            <person name="Brady N."/>
            <person name="Bray-Allen S."/>
            <person name="Bridgeman A.M."/>
            <person name="Brown A.J."/>
            <person name="Brown M.J."/>
            <person name="Bonnin D."/>
            <person name="Bruford E.A."/>
            <person name="Buhay C."/>
            <person name="Burch P."/>
            <person name="Burford D."/>
            <person name="Burgess J."/>
            <person name="Burrill W."/>
            <person name="Burton J."/>
            <person name="Bye J.M."/>
            <person name="Carder C."/>
            <person name="Carrel L."/>
            <person name="Chako J."/>
            <person name="Chapman J.C."/>
            <person name="Chavez D."/>
            <person name="Chen E."/>
            <person name="Chen G."/>
            <person name="Chen Y."/>
            <person name="Chen Z."/>
            <person name="Chinault C."/>
            <person name="Ciccodicola A."/>
            <person name="Clark S.Y."/>
            <person name="Clarke G."/>
            <person name="Clee C.M."/>
            <person name="Clegg S."/>
            <person name="Clerc-Blankenburg K."/>
            <person name="Clifford K."/>
            <person name="Cobley V."/>
            <person name="Cole C.G."/>
            <person name="Conquer J.S."/>
            <person name="Corby N."/>
            <person name="Connor R.E."/>
            <person name="David R."/>
            <person name="Davies J."/>
            <person name="Davis C."/>
            <person name="Davis J."/>
            <person name="Delgado O."/>
            <person name="Deshazo D."/>
            <person name="Dhami P."/>
            <person name="Ding Y."/>
            <person name="Dinh H."/>
            <person name="Dodsworth S."/>
            <person name="Draper H."/>
            <person name="Dugan-Rocha S."/>
            <person name="Dunham A."/>
            <person name="Dunn M."/>
            <person name="Durbin K.J."/>
            <person name="Dutta I."/>
            <person name="Eades T."/>
            <person name="Ellwood M."/>
            <person name="Emery-Cohen A."/>
            <person name="Errington H."/>
            <person name="Evans K.L."/>
            <person name="Faulkner L."/>
            <person name="Francis F."/>
            <person name="Frankland J."/>
            <person name="Fraser A.E."/>
            <person name="Galgoczy P."/>
            <person name="Gilbert J."/>
            <person name="Gill R."/>
            <person name="Gloeckner G."/>
            <person name="Gregory S.G."/>
            <person name="Gribble S."/>
            <person name="Griffiths C."/>
            <person name="Grocock R."/>
            <person name="Gu Y."/>
            <person name="Gwilliam R."/>
            <person name="Hamilton C."/>
            <person name="Hart E.A."/>
            <person name="Hawes A."/>
            <person name="Heath P.D."/>
            <person name="Heitmann K."/>
            <person name="Hennig S."/>
            <person name="Hernandez J."/>
            <person name="Hinzmann B."/>
            <person name="Ho S."/>
            <person name="Hoffs M."/>
            <person name="Howden P.J."/>
            <person name="Huckle E.J."/>
            <person name="Hume J."/>
            <person name="Hunt P.J."/>
            <person name="Hunt A.R."/>
            <person name="Isherwood J."/>
            <person name="Jacob L."/>
            <person name="Johnson D."/>
            <person name="Jones S."/>
            <person name="de Jong P.J."/>
            <person name="Joseph S.S."/>
            <person name="Keenan S."/>
            <person name="Kelly S."/>
            <person name="Kershaw J.K."/>
            <person name="Khan Z."/>
            <person name="Kioschis P."/>
            <person name="Klages S."/>
            <person name="Knights A.J."/>
            <person name="Kosiura A."/>
            <person name="Kovar-Smith C."/>
            <person name="Laird G.K."/>
            <person name="Langford C."/>
            <person name="Lawlor S."/>
            <person name="Leversha M."/>
            <person name="Lewis L."/>
            <person name="Liu W."/>
            <person name="Lloyd C."/>
            <person name="Lloyd D.M."/>
            <person name="Loulseged H."/>
            <person name="Loveland J.E."/>
            <person name="Lovell J.D."/>
            <person name="Lozado R."/>
            <person name="Lu J."/>
            <person name="Lyne R."/>
            <person name="Ma J."/>
            <person name="Maheshwari M."/>
            <person name="Matthews L.H."/>
            <person name="McDowall J."/>
            <person name="McLaren S."/>
            <person name="McMurray A."/>
            <person name="Meidl P."/>
            <person name="Meitinger T."/>
            <person name="Milne S."/>
            <person name="Miner G."/>
            <person name="Mistry S.L."/>
            <person name="Morgan M."/>
            <person name="Morris S."/>
            <person name="Mueller I."/>
            <person name="Mullikin J.C."/>
            <person name="Nguyen N."/>
            <person name="Nordsiek G."/>
            <person name="Nyakatura G."/>
            <person name="O'dell C.N."/>
            <person name="Okwuonu G."/>
            <person name="Palmer S."/>
            <person name="Pandian R."/>
            <person name="Parker D."/>
            <person name="Parrish J."/>
            <person name="Pasternak S."/>
            <person name="Patel D."/>
            <person name="Pearce A.V."/>
            <person name="Pearson D.M."/>
            <person name="Pelan S.E."/>
            <person name="Perez L."/>
            <person name="Porter K.M."/>
            <person name="Ramsey Y."/>
            <person name="Reichwald K."/>
            <person name="Rhodes S."/>
            <person name="Ridler K.A."/>
            <person name="Schlessinger D."/>
            <person name="Schueler M.G."/>
            <person name="Sehra H.K."/>
            <person name="Shaw-Smith C."/>
            <person name="Shen H."/>
            <person name="Sheridan E.M."/>
            <person name="Shownkeen R."/>
            <person name="Skuce C.D."/>
            <person name="Smith M.L."/>
            <person name="Sotheran E.C."/>
            <person name="Steingruber H.E."/>
            <person name="Steward C.A."/>
            <person name="Storey R."/>
            <person name="Swann R.M."/>
            <person name="Swarbreck D."/>
            <person name="Tabor P.E."/>
            <person name="Taudien S."/>
            <person name="Taylor T."/>
            <person name="Teague B."/>
            <person name="Thomas K."/>
            <person name="Thorpe A."/>
            <person name="Timms K."/>
            <person name="Tracey A."/>
            <person name="Trevanion S."/>
            <person name="Tromans A.C."/>
            <person name="d'Urso M."/>
            <person name="Verduzco D."/>
            <person name="Villasana D."/>
            <person name="Waldron L."/>
            <person name="Wall M."/>
            <person name="Wang Q."/>
            <person name="Warren J."/>
            <person name="Warry G.L."/>
            <person name="Wei X."/>
            <person name="West A."/>
            <person name="Whitehead S.L."/>
            <person name="Whiteley M.N."/>
            <person name="Wilkinson J.E."/>
            <person name="Willey D.L."/>
            <person name="Williams G."/>
            <person name="Williams L."/>
            <person name="Williamson A."/>
            <person name="Williamson H."/>
            <person name="Wilming L."/>
            <person name="Woodmansey R.L."/>
            <person name="Wray P.W."/>
            <person name="Yen J."/>
            <person name="Zhang J."/>
            <person name="Zhou J."/>
            <person name="Zoghbi H."/>
            <person name="Zorilla S."/>
            <person name="Buck D."/>
            <person name="Reinhardt R."/>
            <person name="Poustka A."/>
            <person name="Rosenthal A."/>
            <person name="Lehrach H."/>
            <person name="Meindl A."/>
            <person name="Minx P.J."/>
            <person name="Hillier L.W."/>
            <person name="Willard H.F."/>
            <person name="Wilson R.K."/>
            <person name="Waterston R.H."/>
            <person name="Rice C.M."/>
            <person name="Vaudin M."/>
            <person name="Coulson A."/>
            <person name="Nelson D.L."/>
            <person name="Weinstock G."/>
            <person name="Sulston J.E."/>
            <person name="Durbin R.M."/>
            <person name="Hubbard T."/>
            <person name="Gibbs R.A."/>
            <person name="Beck S."/>
            <person name="Rogers J."/>
            <person name="Bentley D.R."/>
        </authorList>
    </citation>
    <scope>NUCLEOTIDE SEQUENCE [LARGE SCALE GENOMIC DNA]</scope>
</reference>
<reference key="4">
    <citation type="submission" date="2005-09" db="EMBL/GenBank/DDBJ databases">
        <authorList>
            <person name="Mural R.J."/>
            <person name="Istrail S."/>
            <person name="Sutton G.G."/>
            <person name="Florea L."/>
            <person name="Halpern A.L."/>
            <person name="Mobarry C.M."/>
            <person name="Lippert R."/>
            <person name="Walenz B."/>
            <person name="Shatkay H."/>
            <person name="Dew I."/>
            <person name="Miller J.R."/>
            <person name="Flanigan M.J."/>
            <person name="Edwards N.J."/>
            <person name="Bolanos R."/>
            <person name="Fasulo D."/>
            <person name="Halldorsson B.V."/>
            <person name="Hannenhalli S."/>
            <person name="Turner R."/>
            <person name="Yooseph S."/>
            <person name="Lu F."/>
            <person name="Nusskern D.R."/>
            <person name="Shue B.C."/>
            <person name="Zheng X.H."/>
            <person name="Zhong F."/>
            <person name="Delcher A.L."/>
            <person name="Huson D.H."/>
            <person name="Kravitz S.A."/>
            <person name="Mouchard L."/>
            <person name="Reinert K."/>
            <person name="Remington K.A."/>
            <person name="Clark A.G."/>
            <person name="Waterman M.S."/>
            <person name="Eichler E.E."/>
            <person name="Adams M.D."/>
            <person name="Hunkapiller M.W."/>
            <person name="Myers E.W."/>
            <person name="Venter J.C."/>
        </authorList>
    </citation>
    <scope>NUCLEOTIDE SEQUENCE [LARGE SCALE GENOMIC DNA]</scope>
</reference>
<reference key="5">
    <citation type="journal article" date="2004" name="Genome Res.">
        <title>The status, quality, and expansion of the NIH full-length cDNA project: the Mammalian Gene Collection (MGC).</title>
        <authorList>
            <consortium name="The MGC Project Team"/>
        </authorList>
    </citation>
    <scope>NUCLEOTIDE SEQUENCE [LARGE SCALE MRNA] (ISOFORM 1)</scope>
    <source>
        <tissue>Lung</tissue>
    </source>
</reference>
<reference key="6">
    <citation type="journal article" date="2002" name="Cell">
        <title>Regulation and destabilization of HIF-1alpha by ARD1-mediated acetylation.</title>
        <authorList>
            <person name="Jeong J.-W."/>
            <person name="Bae M.-K."/>
            <person name="Ahn M.-Y."/>
            <person name="Kim S.-H."/>
            <person name="Sohn T.-K."/>
            <person name="Bae M.-H."/>
            <person name="Yoo M.-A."/>
            <person name="Song E.-J."/>
            <person name="Lee K.-J."/>
            <person name="Kim K.-W."/>
        </authorList>
    </citation>
    <scope>INTERACTION WITH HIF1A</scope>
    <scope>FUNCTION</scope>
    <scope>TISSUE SPECIFICITY</scope>
    <scope>SUBCELLULAR LOCATION</scope>
</reference>
<reference key="7">
    <citation type="journal article" date="2006" name="Cell">
        <title>Global, in vivo, and site-specific phosphorylation dynamics in signaling networks.</title>
        <authorList>
            <person name="Olsen J.V."/>
            <person name="Blagoev B."/>
            <person name="Gnad F."/>
            <person name="Macek B."/>
            <person name="Kumar C."/>
            <person name="Mortensen P."/>
            <person name="Mann M."/>
        </authorList>
    </citation>
    <scope>PHOSPHORYLATION [LARGE SCALE ANALYSIS] AT SER-182</scope>
    <scope>IDENTIFICATION BY MASS SPECTROMETRY [LARGE SCALE ANALYSIS]</scope>
    <source>
        <tissue>Cervix carcinoma</tissue>
    </source>
</reference>
<reference key="8">
    <citation type="journal article" date="2006" name="Gene">
        <title>Cloning and characterization of hNAT5/hSAN: an evolutionarily conserved component of the NatA protein N-alpha-acetyltransferase complex.</title>
        <authorList>
            <person name="Arnesen T."/>
            <person name="Anderson D."/>
            <person name="Torsvik J."/>
            <person name="Halseth H.B."/>
            <person name="Varhaug J.E."/>
            <person name="Lillehaug J.R."/>
        </authorList>
    </citation>
    <scope>INTERACTION WITH NAA50</scope>
</reference>
<reference key="9">
    <citation type="journal article" date="2008" name="Proc. Natl. Acad. Sci. U.S.A.">
        <title>A quantitative atlas of mitotic phosphorylation.</title>
        <authorList>
            <person name="Dephoure N."/>
            <person name="Zhou C."/>
            <person name="Villen J."/>
            <person name="Beausoleil S.A."/>
            <person name="Bakalarski C.E."/>
            <person name="Elledge S.J."/>
            <person name="Gygi S.P."/>
        </authorList>
    </citation>
    <scope>PHOSPHORYLATION [LARGE SCALE ANALYSIS] AT SER-186 AND SER-205</scope>
    <scope>IDENTIFICATION BY MASS SPECTROMETRY [LARGE SCALE ANALYSIS]</scope>
    <source>
        <tissue>Cervix carcinoma</tissue>
    </source>
</reference>
<reference key="10">
    <citation type="journal article" date="2009" name="Anal. Chem.">
        <title>Lys-N and trypsin cover complementary parts of the phosphoproteome in a refined SCX-based approach.</title>
        <authorList>
            <person name="Gauci S."/>
            <person name="Helbig A.O."/>
            <person name="Slijper M."/>
            <person name="Krijgsveld J."/>
            <person name="Heck A.J."/>
            <person name="Mohammed S."/>
        </authorList>
    </citation>
    <scope>ACETYLATION [LARGE SCALE ANALYSIS] AT MET-1</scope>
    <scope>IDENTIFICATION BY MASS SPECTROMETRY [LARGE SCALE ANALYSIS]</scope>
</reference>
<reference key="11">
    <citation type="journal article" date="2009" name="BMC Biochem.">
        <title>A novel human NatA Nalpha-terminal acetyltransferase complex: hNaa16p-hNaa10p (hNat2-hArd1).</title>
        <authorList>
            <person name="Arnesen T."/>
            <person name="Gromyko D."/>
            <person name="Kagabo D."/>
            <person name="Betts M.J."/>
            <person name="Starheim K.K."/>
            <person name="Varhaug J.E."/>
            <person name="Anderson D."/>
            <person name="Lillehaug J.R."/>
        </authorList>
    </citation>
    <scope>INTERACTION WITH NAA16</scope>
</reference>
<reference key="12">
    <citation type="journal article" date="2009" name="BMC Proc.">
        <title>A synopsis of eukaryotic Nalpha-terminal acetyltransferases: nomenclature, subunits and substrates.</title>
        <authorList>
            <person name="Polevoda B."/>
            <person name="Arnesen T."/>
            <person name="Sherman F."/>
        </authorList>
    </citation>
    <scope>NOMENCLATURE</scope>
</reference>
<reference key="13">
    <citation type="journal article" date="2009" name="Biochem. Biophys. Res. Commun.">
        <title>Phosphorylation of ARD1 by IKKbeta contributes to its destabilization and degradation.</title>
        <authorList>
            <person name="Kuo H.P."/>
            <person name="Lee D.F."/>
            <person name="Xia W."/>
            <person name="Lai C.C."/>
            <person name="Li L.Y."/>
            <person name="Hung M.C."/>
        </authorList>
    </citation>
    <scope>PHOSPHORYLATION AT SER-209 BY IKBKB</scope>
    <scope>MUTAGENESIS OF SER-209</scope>
    <scope>INTERACTION WITH IKBKB</scope>
</reference>
<reference key="14">
    <citation type="journal article" date="2009" name="PLoS ONE">
        <title>Arrest defective-1 controls tumor cell behavior by acetylating myosin light chain kinase.</title>
        <authorList>
            <person name="Shin D.H."/>
            <person name="Chun Y.-S."/>
            <person name="Lee K.-H."/>
            <person name="Shin H.-W."/>
            <person name="Park J.-W."/>
        </authorList>
    </citation>
    <scope>FUNCTION</scope>
    <scope>INTERACTION WITH MYLK</scope>
</reference>
<reference key="15">
    <citation type="journal article" date="2009" name="Proc. Natl. Acad. Sci. U.S.A.">
        <title>Proteomics analyses reveal the evolutionary conservation and divergence of N-terminal acetyltransferases from yeast and humans.</title>
        <authorList>
            <person name="Arnesen T."/>
            <person name="Van Damme P."/>
            <person name="Polevoda B."/>
            <person name="Helsens K."/>
            <person name="Evjenth R."/>
            <person name="Colaert N."/>
            <person name="Varhaug J.E."/>
            <person name="Vandekerckhove J."/>
            <person name="Lillehaug J.R."/>
            <person name="Sherman F."/>
            <person name="Gevaert K."/>
        </authorList>
    </citation>
    <scope>FUNCTION</scope>
    <scope>CATALYTIC ACTIVITY</scope>
</reference>
<reference key="16">
    <citation type="journal article" date="2010" name="Mol. Cell. Biol.">
        <title>The chaperone-like protein HYPK acts together with NatA in cotranslational N-terminal acetylation and prevention of Huntingtin aggregation.</title>
        <authorList>
            <person name="Arnesen T."/>
            <person name="Starheim K.K."/>
            <person name="Van Damme P."/>
            <person name="Evjenth R."/>
            <person name="Dinh H."/>
            <person name="Betts M.J."/>
            <person name="Ryningen A."/>
            <person name="Vandekerckhove J."/>
            <person name="Gevaert K."/>
            <person name="Anderson D."/>
        </authorList>
    </citation>
    <scope>FUNCTION</scope>
    <scope>IDENTIFICATION IN THE N-TERMINAL ACETYLTRANSFERASE A COMPLEX</scope>
    <scope>IDENTIFICATION IN THE N-TERMINAL ACETYLTRANSFERASE A/HYPK COMPLEX</scope>
    <scope>INTERACTION WITH HYPK AND NAA15</scope>
</reference>
<reference key="17">
    <citation type="journal article" date="2010" name="Sci. Signal.">
        <title>Quantitative phosphoproteomics reveals widespread full phosphorylation site occupancy during mitosis.</title>
        <authorList>
            <person name="Olsen J.V."/>
            <person name="Vermeulen M."/>
            <person name="Santamaria A."/>
            <person name="Kumar C."/>
            <person name="Miller M.L."/>
            <person name="Jensen L.J."/>
            <person name="Gnad F."/>
            <person name="Cox J."/>
            <person name="Jensen T.S."/>
            <person name="Nigg E.A."/>
            <person name="Brunak S."/>
            <person name="Mann M."/>
        </authorList>
    </citation>
    <scope>PHOSPHORYLATION [LARGE SCALE ANALYSIS] AT SER-182; SER-205; SER-213 AND SER-216</scope>
    <scope>IDENTIFICATION BY MASS SPECTROMETRY [LARGE SCALE ANALYSIS]</scope>
    <source>
        <tissue>Cervix carcinoma</tissue>
    </source>
</reference>
<reference key="18">
    <citation type="journal article" date="2010" name="Sci. Signal.">
        <title>ARD1 stabilization of TSC2 suppresses tumorigenesis through the mTOR signaling pathway.</title>
        <authorList>
            <person name="Kuo H.P."/>
            <person name="Lee D.F."/>
            <person name="Chen C.T."/>
            <person name="Liu M."/>
            <person name="Chou C.K."/>
            <person name="Lee H.J."/>
            <person name="Du Y."/>
            <person name="Xie X."/>
            <person name="Wei Y."/>
            <person name="Xia W."/>
            <person name="Weihua Z."/>
            <person name="Yang J.Y."/>
            <person name="Yen C.J."/>
            <person name="Huang T.H."/>
            <person name="Tan M."/>
            <person name="Xing G."/>
            <person name="Zhao Y."/>
            <person name="Lin C.H."/>
            <person name="Tsai S.F."/>
            <person name="Fidler I.J."/>
            <person name="Hung M.C."/>
        </authorList>
    </citation>
    <scope>INTERACTION WITH TSC2</scope>
    <scope>FUNCTION IN ACETYLATION OF TSC2</scope>
</reference>
<reference key="19">
    <citation type="journal article" date="2011" name="BMC Syst. Biol.">
        <title>Initial characterization of the human central proteome.</title>
        <authorList>
            <person name="Burkard T.R."/>
            <person name="Planyavsky M."/>
            <person name="Kaupe I."/>
            <person name="Breitwieser F.P."/>
            <person name="Buerckstuemmer T."/>
            <person name="Bennett K.L."/>
            <person name="Superti-Furga G."/>
            <person name="Colinge J."/>
        </authorList>
    </citation>
    <scope>IDENTIFICATION BY MASS SPECTROMETRY [LARGE SCALE ANALYSIS]</scope>
</reference>
<reference key="20">
    <citation type="journal article" date="2011" name="Sci. Signal.">
        <title>System-wide temporal characterization of the proteome and phosphoproteome of human embryonic stem cell differentiation.</title>
        <authorList>
            <person name="Rigbolt K.T."/>
            <person name="Prokhorova T.A."/>
            <person name="Akimov V."/>
            <person name="Henningsen J."/>
            <person name="Johansen P.T."/>
            <person name="Kratchmarova I."/>
            <person name="Kassem M."/>
            <person name="Mann M."/>
            <person name="Olsen J.V."/>
            <person name="Blagoev B."/>
        </authorList>
    </citation>
    <scope>PHOSPHORYLATION [LARGE SCALE ANALYSIS] AT SER-182 AND SER-205</scope>
    <scope>IDENTIFICATION BY MASS SPECTROMETRY [LARGE SCALE ANALYSIS]</scope>
</reference>
<reference key="21">
    <citation type="journal article" date="2013" name="J. Proteome Res.">
        <title>Toward a comprehensive characterization of a human cancer cell phosphoproteome.</title>
        <authorList>
            <person name="Zhou H."/>
            <person name="Di Palma S."/>
            <person name="Preisinger C."/>
            <person name="Peng M."/>
            <person name="Polat A.N."/>
            <person name="Heck A.J."/>
            <person name="Mohammed S."/>
        </authorList>
    </citation>
    <scope>PHOSPHORYLATION [LARGE SCALE ANALYSIS] AT SER-182; SER-186 AND SER-205</scope>
    <scope>IDENTIFICATION BY MASS SPECTROMETRY [LARGE SCALE ANALYSIS]</scope>
    <source>
        <tissue>Cervix carcinoma</tissue>
        <tissue>Erythroleukemia</tissue>
    </source>
</reference>
<reference key="22">
    <citation type="journal article" date="2014" name="J. Med. Genet.">
        <title>A splice donor mutation in NAA10 results in the dysregulation of the retinoic acid signalling pathway and causes Lenz microphthalmia syndrome.</title>
        <authorList>
            <person name="Esmailpour T."/>
            <person name="Riazifar H."/>
            <person name="Liu L."/>
            <person name="Donkervoort S."/>
            <person name="Huang V.H."/>
            <person name="Madaan S."/>
            <person name="Shoucri B.M."/>
            <person name="Busch A."/>
            <person name="Wu J."/>
            <person name="Towbin A."/>
            <person name="Chadwick R.B."/>
            <person name="Sequeira A."/>
            <person name="Vawter M.P."/>
            <person name="Sun G."/>
            <person name="Johnston J.J."/>
            <person name="Biesecker L.G."/>
            <person name="Kawaguchi R."/>
            <person name="Sun H."/>
            <person name="Kimonis V."/>
            <person name="Huang T."/>
        </authorList>
    </citation>
    <scope>INVOLVEMENT IN MCOPS1</scope>
</reference>
<reference key="23">
    <citation type="journal article" date="2014" name="J. Proteomics">
        <title>An enzyme assisted RP-RPLC approach for in-depth analysis of human liver phosphoproteome.</title>
        <authorList>
            <person name="Bian Y."/>
            <person name="Song C."/>
            <person name="Cheng K."/>
            <person name="Dong M."/>
            <person name="Wang F."/>
            <person name="Huang J."/>
            <person name="Sun D."/>
            <person name="Wang L."/>
            <person name="Ye M."/>
            <person name="Zou H."/>
        </authorList>
    </citation>
    <scope>PHOSPHORYLATION [LARGE SCALE ANALYSIS] AT SER-186</scope>
    <scope>IDENTIFICATION BY MASS SPECTROMETRY [LARGE SCALE ANALYSIS]</scope>
    <source>
        <tissue>Liver</tissue>
    </source>
</reference>
<reference key="24">
    <citation type="journal article" date="2015" name="Cell Rep.">
        <title>An organellar nalpha-acetyltransferase, naa60, acetylates cytosolic N termini of transmembrane proteins and maintains Golgi integrity.</title>
        <authorList>
            <person name="Aksnes H."/>
            <person name="Van Damme P."/>
            <person name="Goris M."/>
            <person name="Starheim K.K."/>
            <person name="Marie M."/>
            <person name="Stoeve S.I."/>
            <person name="Hoel C."/>
            <person name="Kalvik T.V."/>
            <person name="Hole K."/>
            <person name="Glomnes N."/>
            <person name="Furnes C."/>
            <person name="Ljostveit S."/>
            <person name="Ziegler M."/>
            <person name="Niere M."/>
            <person name="Gevaert K."/>
            <person name="Arnesen T."/>
        </authorList>
    </citation>
    <scope>SUBCELLULAR LOCATION</scope>
</reference>
<reference key="25">
    <citation type="journal article" date="2016" name="J. Biol. Chem.">
        <title>Opposing functions of the N-terminal acetyltransferases Naa50 and NatA in sister-chromatid cohesion.</title>
        <authorList>
            <person name="Rong Z."/>
            <person name="Ouyang Z."/>
            <person name="Magin R.S."/>
            <person name="Marmorstein R."/>
            <person name="Yu H."/>
        </authorList>
    </citation>
    <scope>FUNCTION</scope>
</reference>
<reference key="26">
    <citation type="journal article" date="2016" name="Nat. Commun.">
        <title>ARD1-mediated Hsp70 acetylation balances stress-induced protein refolding and degradation.</title>
        <authorList>
            <person name="Seo J.H."/>
            <person name="Park J.H."/>
            <person name="Lee E.J."/>
            <person name="Vo T.T."/>
            <person name="Choi H."/>
            <person name="Kim J.Y."/>
            <person name="Jang J.K."/>
            <person name="Wee H.J."/>
            <person name="Lee H.S."/>
            <person name="Jang S.H."/>
            <person name="Park Z.Y."/>
            <person name="Jeong J."/>
            <person name="Lee K.J."/>
            <person name="Seok S.H."/>
            <person name="Park J.Y."/>
            <person name="Lee B.J."/>
            <person name="Lee M.N."/>
            <person name="Oh G.T."/>
            <person name="Kim K.W."/>
        </authorList>
    </citation>
    <scope>FUNCTION</scope>
    <scope>INTERACTION WITH HSPA1A AND HSPA1B</scope>
    <scope>ACETYLATION AT LYS-136</scope>
    <scope>MUTAGENESIS OF LYS-136</scope>
</reference>
<reference evidence="23 24" key="27">
    <citation type="journal article" date="2018" name="Structure">
        <title>Structure of Human NatA and Its Regulation by the Huntingtin Interacting Protein HYPK.</title>
        <authorList>
            <person name="Gottlieb L."/>
            <person name="Marmorstein R."/>
        </authorList>
    </citation>
    <scope>X-RAY CRYSTALLOGRAPHY (2.80 ANGSTROMS) OF 1-160 IN COMPLEX WITH NAA15 AND HYPK</scope>
    <scope>FUNCTION</scope>
    <scope>CATALYTIC ACTIVITY</scope>
    <scope>BIOPHYSICOCHEMICAL PROPERTIES</scope>
    <scope>IDENTIFICATION IN THE N-TERMINAL ACETYLTRANSFERASE A/HYPK COMPLEX</scope>
    <scope>IDENTIFICATION IN THE N-TERMINAL ACETYLTRANSFERASE E COMPLEX</scope>
    <scope>INTERACTION WITH NAA15</scope>
</reference>
<reference evidence="25 26" key="28">
    <citation type="journal article" date="2020" name="Nat. Commun.">
        <title>Molecular basis for N-terminal acetylation by human NatE and its modulation by HYPK.</title>
        <authorList>
            <person name="Deng S."/>
            <person name="McTiernan N."/>
            <person name="Wei X."/>
            <person name="Arnesen T."/>
            <person name="Marmorstein R."/>
        </authorList>
    </citation>
    <scope>STRUCTURE BY ELECTRON MICROSCOPY (3.02 ANGSTROMS)</scope>
    <scope>FUNCTION</scope>
    <scope>IDENTIFICATION IN THE N-TERMINAL ACETYLTRANSFERASE A COMPLEX</scope>
    <scope>IDENTIFICATION IN THE N-TERMINAL ACETYLTRANSFERASE A/HYPK COMPLEX</scope>
    <scope>IDENTIFICATIONIN THE N-TERMINAL ACETYLTRANSFERASE E COMPLEX</scope>
    <scope>IDENTIFICATION IN THE N-TERMINAL ACETYLTRANSFERASE E/HYPK COMPLEX</scope>
    <scope>INTERACTION WITH NAA15; HYPK AND NAA50</scope>
</reference>
<reference key="29">
    <citation type="journal article" date="2011" name="Am. J. Hum. Genet.">
        <title>Using VAAST to identify an X-linked disorder resulting in lethality in male infants due to N-terminal acetyltransferase deficiency.</title>
        <authorList>
            <person name="Rope A.F."/>
            <person name="Wang K."/>
            <person name="Evjenth R."/>
            <person name="Xing J."/>
            <person name="Johnston J.J."/>
            <person name="Swensen J.J."/>
            <person name="Johnson W.E."/>
            <person name="Moore B."/>
            <person name="Huff C.D."/>
            <person name="Bird L.M."/>
            <person name="Carey J.C."/>
            <person name="Opitz J.M."/>
            <person name="Stevens C.A."/>
            <person name="Jiang T."/>
            <person name="Schank C."/>
            <person name="Fain H.D."/>
            <person name="Robison R."/>
            <person name="Dalley B."/>
            <person name="Chin S."/>
            <person name="South S.T."/>
            <person name="Pysher T.J."/>
            <person name="Jorde L.B."/>
            <person name="Hakonarson H."/>
            <person name="Lillehaug J.R."/>
            <person name="Biesecker L.G."/>
            <person name="Yandell M."/>
            <person name="Arnesen T."/>
            <person name="Lyon G.J."/>
        </authorList>
    </citation>
    <scope>VARIANT NATD PRO-37</scope>
    <scope>CHARACTERIZATION OF VARIANT NATD PRO-37</scope>
</reference>
<reference key="30">
    <citation type="journal article" date="2015" name="Hum. Mol. Genet.">
        <title>Biochemical and cellular analysis of Ogden syndrome reveals downstream Nt-acetylation defects.</title>
        <authorList>
            <person name="Myklebust L.M."/>
            <person name="Van Damme P."/>
            <person name="Stoeve S.I."/>
            <person name="Doerfel M.J."/>
            <person name="Abboud A."/>
            <person name="Kalvik T.V."/>
            <person name="Grauffel C."/>
            <person name="Jonckheere V."/>
            <person name="Wu Y."/>
            <person name="Swensen J."/>
            <person name="Kaasa H."/>
            <person name="Liszczak G."/>
            <person name="Marmorstein R."/>
            <person name="Reuter N."/>
            <person name="Lyon G.J."/>
            <person name="Gevaert K."/>
            <person name="Arnesen T."/>
        </authorList>
    </citation>
    <scope>VARIANT NATD PRO-37</scope>
    <scope>CHARACTERIZATION OF VARIANT NATD PRO-37</scope>
    <scope>FUNCTION</scope>
    <scope>CATALYTIC ACTIVITY</scope>
    <scope>SUBCELLULAR LOCATION</scope>
</reference>
<reference key="31">
    <citation type="journal article" date="2015" name="Sci. Rep.">
        <title>NAA10 mutation causing a novel intellectual disability syndrome with Long QT due to N-terminal acetyltransferase impairment.</title>
        <authorList>
            <person name="Casey J.P."/>
            <person name="Stoeve S.I."/>
            <person name="McGorrian C."/>
            <person name="Galvin J."/>
            <person name="Blenski M."/>
            <person name="Dunne A."/>
            <person name="Ennis S."/>
            <person name="Brett F."/>
            <person name="King M.D."/>
            <person name="Arnesen T."/>
            <person name="Lynch S.A."/>
        </authorList>
    </citation>
    <scope>VARIANT NATD SER-43</scope>
    <scope>CHARACTERIZATION OF VARIANT NATD SER-43</scope>
</reference>
<reference key="32">
    <citation type="journal article" date="2019" name="BMC Med. Genet.">
        <title>A novel NAA10 p.(R83H) variant with impaired acetyltransferase activity identified in two boys with ID and microcephaly.</title>
        <authorList>
            <consortium name="DDD study"/>
            <person name="Ree R."/>
            <person name="Geithus A.S."/>
            <person name="Toerring P.M."/>
            <person name="Soerensen K.P."/>
            <person name="Damkjaer M."/>
            <person name="Lynch S.A."/>
            <person name="Arnesen T."/>
        </authorList>
    </citation>
    <scope>VARIANT NATD HIS-83</scope>
    <scope>CHARACTERIZATION OF VARIANT NATD HIS-83</scope>
</reference>
<organism>
    <name type="scientific">Homo sapiens</name>
    <name type="common">Human</name>
    <dbReference type="NCBI Taxonomy" id="9606"/>
    <lineage>
        <taxon>Eukaryota</taxon>
        <taxon>Metazoa</taxon>
        <taxon>Chordata</taxon>
        <taxon>Craniata</taxon>
        <taxon>Vertebrata</taxon>
        <taxon>Euteleostomi</taxon>
        <taxon>Mammalia</taxon>
        <taxon>Eutheria</taxon>
        <taxon>Euarchontoglires</taxon>
        <taxon>Primates</taxon>
        <taxon>Haplorrhini</taxon>
        <taxon>Catarrhini</taxon>
        <taxon>Hominidae</taxon>
        <taxon>Homo</taxon>
    </lineage>
</organism>
<sequence>MNIRNARPEDLMNMQHCNLLCLPENYQMKYYFYHGLSWPQLSYIAEDENGKIVGYVLAKMEEDPDDVPHGHITSLAVKRSHRRLGLAQKLMDQASRAMIENFNAKYVSLHVRKSNRAALHLYSNTLNFQISEVEPKYYADGEDAYAMKRDLTQMADELRRHLELKEKGRHVVLGAIENKVESKGNSPPSSGEACREEKGLAAEDSGGDSKDLSEVSETTESTDVKDSSEASDSAS</sequence>
<accession>P41227</accession>
<accession>A6NM98</accession>
<gene>
    <name type="primary">NAA10</name>
    <name type="synonym">ARD1</name>
    <name type="synonym">ARD1A</name>
    <name type="synonym">TE2</name>
</gene>
<keyword id="KW-0002">3D-structure</keyword>
<keyword id="KW-0007">Acetylation</keyword>
<keyword id="KW-0012">Acyltransferase</keyword>
<keyword id="KW-0025">Alternative splicing</keyword>
<keyword id="KW-0963">Cytoplasm</keyword>
<keyword id="KW-0225">Disease variant</keyword>
<keyword id="KW-1013">Microphthalmia</keyword>
<keyword id="KW-0539">Nucleus</keyword>
<keyword id="KW-0597">Phosphoprotein</keyword>
<keyword id="KW-1267">Proteomics identification</keyword>
<keyword id="KW-1185">Reference proteome</keyword>
<keyword id="KW-0808">Transferase</keyword>
<comment type="function">
    <text evidence="3 4 6 8 9 10 13 16 17 18 20">Catalytic subunit of N-terminal acetyltransferase complexes which display alpha (N-terminal) acetyltransferase activity (PubMed:15496142, PubMed:19420222, PubMed:19826488, PubMed:20145209, PubMed:20154145, PubMed:25489052, PubMed:27708256, PubMed:29754825, PubMed:32042062). Acetylates amino termini that are devoid of initiator methionine (PubMed:19420222). The alpha (N-terminal) acetyltransferase activity may be important for vascular, hematopoietic and neuronal growth and development. Without NAA15, displays epsilon (internal) acetyltransferase activity towards HIF1A, thereby promoting its degradation (PubMed:12464182). Represses MYLK kinase activity by acetylation, and thus represses tumor cell migration (PubMed:19826488). Acetylates, and stabilizes TSC2, thereby repressing mTOR activity and suppressing cancer development (PubMed:20145209). Acetylates HSPA1A and HSPA1B at 'Lys-77' which enhances its chaperone activity and leads to preferential binding to co-chaperone HOPX (PubMed:27708256). Acetylates HIST1H4A (PubMed:29754825). Acts as a negative regulator of sister chromatid cohesion during mitosis (PubMed:27422821).</text>
</comment>
<comment type="catalytic activity">
    <reaction evidence="4 6 13">
        <text>N-terminal glycyl-[protein] + acetyl-CoA = N-terminal N(alpha)-acetylglycyl-[protein] + CoA + H(+)</text>
        <dbReference type="Rhea" id="RHEA:50496"/>
        <dbReference type="Rhea" id="RHEA-COMP:12666"/>
        <dbReference type="Rhea" id="RHEA-COMP:12700"/>
        <dbReference type="ChEBI" id="CHEBI:15378"/>
        <dbReference type="ChEBI" id="CHEBI:57287"/>
        <dbReference type="ChEBI" id="CHEBI:57288"/>
        <dbReference type="ChEBI" id="CHEBI:64723"/>
        <dbReference type="ChEBI" id="CHEBI:133369"/>
        <dbReference type="EC" id="2.3.1.255"/>
    </reaction>
</comment>
<comment type="catalytic activity">
    <reaction evidence="4 6 13">
        <text>N-terminal L-alanyl-[protein] + acetyl-CoA = N-terminal N(alpha)-acetyl-L-alanyl-[protein] + CoA + H(+)</text>
        <dbReference type="Rhea" id="RHEA:50500"/>
        <dbReference type="Rhea" id="RHEA-COMP:12701"/>
        <dbReference type="Rhea" id="RHEA-COMP:12702"/>
        <dbReference type="ChEBI" id="CHEBI:15378"/>
        <dbReference type="ChEBI" id="CHEBI:57287"/>
        <dbReference type="ChEBI" id="CHEBI:57288"/>
        <dbReference type="ChEBI" id="CHEBI:64718"/>
        <dbReference type="ChEBI" id="CHEBI:83683"/>
        <dbReference type="EC" id="2.3.1.255"/>
    </reaction>
</comment>
<comment type="catalytic activity">
    <reaction evidence="4 6 13 18">
        <text>N-terminal L-seryl-[protein] + acetyl-CoA = N-terminal N(alpha)-acetyl-L-seryl-[protein] + CoA + H(+)</text>
        <dbReference type="Rhea" id="RHEA:50504"/>
        <dbReference type="Rhea" id="RHEA-COMP:12703"/>
        <dbReference type="Rhea" id="RHEA-COMP:12704"/>
        <dbReference type="ChEBI" id="CHEBI:15378"/>
        <dbReference type="ChEBI" id="CHEBI:57287"/>
        <dbReference type="ChEBI" id="CHEBI:57288"/>
        <dbReference type="ChEBI" id="CHEBI:64738"/>
        <dbReference type="ChEBI" id="CHEBI:83690"/>
        <dbReference type="EC" id="2.3.1.255"/>
    </reaction>
</comment>
<comment type="catalytic activity">
    <reaction evidence="4 6 13">
        <text>N-terminal L-valyl-[protein] + acetyl-CoA = N-terminal N(alpha)-acetyl-L-valyl-[protein] + CoA + H(+)</text>
        <dbReference type="Rhea" id="RHEA:50508"/>
        <dbReference type="Rhea" id="RHEA-COMP:12705"/>
        <dbReference type="Rhea" id="RHEA-COMP:12706"/>
        <dbReference type="ChEBI" id="CHEBI:15378"/>
        <dbReference type="ChEBI" id="CHEBI:57287"/>
        <dbReference type="ChEBI" id="CHEBI:57288"/>
        <dbReference type="ChEBI" id="CHEBI:64741"/>
        <dbReference type="ChEBI" id="CHEBI:133371"/>
        <dbReference type="EC" id="2.3.1.255"/>
    </reaction>
</comment>
<comment type="catalytic activity">
    <reaction evidence="4 6 13">
        <text>N-terminal L-cysteinyl-[protein] + acetyl-CoA = N-terminal N(alpha)-acetyl-L-cysteinyl-[protein] + CoA + H(+)</text>
        <dbReference type="Rhea" id="RHEA:50512"/>
        <dbReference type="Rhea" id="RHEA-COMP:12707"/>
        <dbReference type="Rhea" id="RHEA-COMP:12708"/>
        <dbReference type="ChEBI" id="CHEBI:15378"/>
        <dbReference type="ChEBI" id="CHEBI:57287"/>
        <dbReference type="ChEBI" id="CHEBI:57288"/>
        <dbReference type="ChEBI" id="CHEBI:65250"/>
        <dbReference type="ChEBI" id="CHEBI:133372"/>
        <dbReference type="EC" id="2.3.1.255"/>
    </reaction>
</comment>
<comment type="catalytic activity">
    <reaction evidence="4 6 13">
        <text>N-terminal L-threonyl-[protein] + acetyl-CoA = N-terminal N(alpha)-acetyl-L-threonyl-[protein] + CoA + H(+)</text>
        <dbReference type="Rhea" id="RHEA:50516"/>
        <dbReference type="Rhea" id="RHEA-COMP:12709"/>
        <dbReference type="Rhea" id="RHEA-COMP:12710"/>
        <dbReference type="ChEBI" id="CHEBI:15378"/>
        <dbReference type="ChEBI" id="CHEBI:57287"/>
        <dbReference type="ChEBI" id="CHEBI:57288"/>
        <dbReference type="ChEBI" id="CHEBI:64739"/>
        <dbReference type="ChEBI" id="CHEBI:133375"/>
        <dbReference type="EC" id="2.3.1.255"/>
    </reaction>
</comment>
<comment type="biophysicochemical properties">
    <kinetics>
        <KM evidence="18">27 uM for acetyl-CoA (at pH 8.0 and at 25 degrees Celsius)</KM>
        <KM evidence="18">30 uM for histone H4 peptide (at pH 8.0 and at 25 degrees Celsius)</KM>
    </kinetics>
</comment>
<comment type="subunit">
    <text evidence="3 4 5 7 8 9 10 17 18 20">Component of the N-terminal acetyltransferase A complex (also called the NatA complex) composed of NAA10 and NAA15 (PubMed:15496142, PubMed:20154145, PubMed:32042062). Within the complex interacts with NAA15 (PubMed:15496142, PubMed:20154145, PubMed:29754825, PubMed:32042062). Component of the N-terminal acetyltransferase A (NatA)/HYPK complex at least composed of NAA10, NAA15 and HYPK, which has N-terminal acetyltransferase activity (PubMed:20154145, PubMed:29754825, PubMed:32042062). In complex with NAA15, interacts with HYPK (PubMed:20154145, PubMed:29754825, PubMed:32042062). Component of the N-terminal acetyltransferase E (NatE) complex at least composed of NAA10, NAA15 and NAA50 (PubMed:29754825, PubMed:32042062). Within the complex interacts with NAA15; the interaction is required for binding to NAAT50 (PubMed:29754825, PubMed:32042062). Interacts with NAAT50 (PubMed:16507339, PubMed:32042062). The interaction of the NatA complex with NAA50 reduces the acetylation activity of the NatA complex (PubMed:32042062). Component of the N-terminal acetyltransferase E (NatE)/HYPK complex at least composed of NAA10, NAA15, NAA50 and HYPK (PubMed:32042062). In complex with NAA15, interacts with HYPK; the interaction with HYPK reduces the capacity of the NatA complex to interact with NAA50 (PubMed:29754825, PubMed:32042062). Interacts with HIF1A (via its ODD domain); the interaction increases HIF1A protein stability during normoxia, an down-regulates it when induced by hypoxia (PubMed:12464182). Interacts with the ribosome (PubMed:16507339). Binds to MYLK (PubMed:19826488). Interacts with NAA16 (PubMed:19480662). Interacts (via its C-terminal domain) with TSC2, leading to its acetylation (PubMed:20145209). Interacts with IKBKB (PubMed:19716809). Interacts with HSPA1A and HSPA1B leading to its acetylation (PubMed:27708256).</text>
</comment>
<comment type="interaction">
    <interactant intactId="EBI-747693">
        <id>P41227</id>
    </interactant>
    <interactant intactId="EBI-11954993">
        <id>Q8WYK0</id>
        <label>ACOT12</label>
    </interactant>
    <organismsDiffer>false</organismsDiffer>
    <experiments>3</experiments>
</comment>
<comment type="interaction">
    <interactant intactId="EBI-747693">
        <id>P41227</id>
    </interactant>
    <interactant intactId="EBI-77613">
        <id>P05067</id>
        <label>APP</label>
    </interactant>
    <organismsDiffer>false</organismsDiffer>
    <experiments>3</experiments>
</comment>
<comment type="interaction">
    <interactant intactId="EBI-747693">
        <id>P41227</id>
    </interactant>
    <interactant intactId="EBI-1642523">
        <id>Q15052</id>
        <label>ARHGEF6</label>
    </interactant>
    <organismsDiffer>false</organismsDiffer>
    <experiments>3</experiments>
</comment>
<comment type="interaction">
    <interactant intactId="EBI-747693">
        <id>P41227</id>
    </interactant>
    <interactant intactId="EBI-717515">
        <id>Q14155</id>
        <label>ARHGEF7</label>
    </interactant>
    <organismsDiffer>false</organismsDiffer>
    <experiments>3</experiments>
</comment>
<comment type="interaction">
    <interactant intactId="EBI-747693">
        <id>P41227</id>
    </interactant>
    <interactant intactId="EBI-13079214">
        <id>Q8WXS3-2</id>
        <label>BAALC</label>
    </interactant>
    <organismsDiffer>false</organismsDiffer>
    <experiments>5</experiments>
</comment>
<comment type="interaction">
    <interactant intactId="EBI-747693">
        <id>P41227</id>
    </interactant>
    <interactant intactId="EBI-10208579">
        <id>Q6W2J9-4</id>
        <label>BCOR</label>
    </interactant>
    <organismsDiffer>false</organismsDiffer>
    <experiments>3</experiments>
</comment>
<comment type="interaction">
    <interactant intactId="EBI-747693">
        <id>P41227</id>
    </interactant>
    <interactant intactId="EBI-739580">
        <id>Q13137</id>
        <label>CALCOCO2</label>
    </interactant>
    <organismsDiffer>false</organismsDiffer>
    <experiments>7</experiments>
</comment>
<comment type="interaction">
    <interactant intactId="EBI-747693">
        <id>P41227</id>
    </interactant>
    <interactant intactId="EBI-23281255">
        <id>A0AAG2UWT9</id>
        <label>CASP8AP2</label>
    </interactant>
    <organismsDiffer>false</organismsDiffer>
    <experiments>3</experiments>
</comment>
<comment type="interaction">
    <interactant intactId="EBI-747693">
        <id>P41227</id>
    </interactant>
    <interactant intactId="EBI-711501">
        <id>Q9BWC9</id>
        <label>CCDC106</label>
    </interactant>
    <organismsDiffer>false</organismsDiffer>
    <experiments>3</experiments>
</comment>
<comment type="interaction">
    <interactant intactId="EBI-747693">
        <id>P41227</id>
    </interactant>
    <interactant intactId="EBI-747830">
        <id>Q6PII3</id>
        <label>CCDC174</label>
    </interactant>
    <organismsDiffer>false</organismsDiffer>
    <experiments>3</experiments>
</comment>
<comment type="interaction">
    <interactant intactId="EBI-747693">
        <id>P41227</id>
    </interactant>
    <interactant intactId="EBI-718805">
        <id>Q96FF9</id>
        <label>CDCA5</label>
    </interactant>
    <organismsDiffer>false</organismsDiffer>
    <experiments>7</experiments>
</comment>
<comment type="interaction">
    <interactant intactId="EBI-747693">
        <id>P41227</id>
    </interactant>
    <interactant intactId="EBI-744115">
        <id>Q9C0F1</id>
        <label>CEP44</label>
    </interactant>
    <organismsDiffer>false</organismsDiffer>
    <experiments>3</experiments>
</comment>
<comment type="interaction">
    <interactant intactId="EBI-747693">
        <id>P41227</id>
    </interactant>
    <interactant intactId="EBI-349854">
        <id>P13569</id>
        <label>CFTR</label>
    </interactant>
    <organismsDiffer>false</organismsDiffer>
    <experiments>5</experiments>
</comment>
<comment type="interaction">
    <interactant intactId="EBI-747693">
        <id>P41227</id>
    </interactant>
    <interactant intactId="EBI-1042699">
        <id>Q8IUR6</id>
        <label>CREBRF</label>
    </interactant>
    <organismsDiffer>false</organismsDiffer>
    <experiments>3</experiments>
</comment>
<comment type="interaction">
    <interactant intactId="EBI-747693">
        <id>P41227</id>
    </interactant>
    <interactant intactId="EBI-742054">
        <id>Q96D03</id>
        <label>DDIT4L</label>
    </interactant>
    <organismsDiffer>false</organismsDiffer>
    <experiments>4</experiments>
</comment>
<comment type="interaction">
    <interactant intactId="EBI-747693">
        <id>P41227</id>
    </interactant>
    <interactant intactId="EBI-1051531">
        <id>Q6P158</id>
        <label>DHX57</label>
    </interactant>
    <organismsDiffer>false</organismsDiffer>
    <experiments>3</experiments>
</comment>
<comment type="interaction">
    <interactant intactId="EBI-747693">
        <id>P41227</id>
    </interactant>
    <interactant intactId="EBI-10174566">
        <id>A2ABF9</id>
        <label>EHMT2</label>
    </interactant>
    <organismsDiffer>false</organismsDiffer>
    <experiments>3</experiments>
</comment>
<comment type="interaction">
    <interactant intactId="EBI-747693">
        <id>P41227</id>
    </interactant>
    <interactant intactId="EBI-1021914">
        <id>Q6UN15</id>
        <label>FIP1L1</label>
    </interactant>
    <organismsDiffer>false</organismsDiffer>
    <experiments>3</experiments>
</comment>
<comment type="interaction">
    <interactant intactId="EBI-747693">
        <id>P41227</id>
    </interactant>
    <interactant intactId="EBI-11959863">
        <id>Q9NWQ4-1</id>
        <label>GPATCH2L</label>
    </interactant>
    <organismsDiffer>false</organismsDiffer>
    <experiments>3</experiments>
</comment>
<comment type="interaction">
    <interactant intactId="EBI-747693">
        <id>P41227</id>
    </interactant>
    <interactant intactId="EBI-954040">
        <id>Q92845</id>
        <label>KIFAP3</label>
    </interactant>
    <organismsDiffer>false</organismsDiffer>
    <experiments>7</experiments>
</comment>
<comment type="interaction">
    <interactant intactId="EBI-747693">
        <id>P41227</id>
    </interactant>
    <interactant intactId="EBI-10172150">
        <id>P60370</id>
        <label>KRTAP10-5</label>
    </interactant>
    <organismsDiffer>false</organismsDiffer>
    <experiments>3</experiments>
</comment>
<comment type="interaction">
    <interactant intactId="EBI-747693">
        <id>P41227</id>
    </interactant>
    <interactant intactId="EBI-12012928">
        <id>P60371</id>
        <label>KRTAP10-6</label>
    </interactant>
    <organismsDiffer>false</organismsDiffer>
    <experiments>3</experiments>
</comment>
<comment type="interaction">
    <interactant intactId="EBI-747693">
        <id>P41227</id>
    </interactant>
    <interactant intactId="EBI-10172290">
        <id>P60409</id>
        <label>KRTAP10-7</label>
    </interactant>
    <organismsDiffer>false</organismsDiffer>
    <experiments>3</experiments>
</comment>
<comment type="interaction">
    <interactant intactId="EBI-747693">
        <id>P41227</id>
    </interactant>
    <interactant intactId="EBI-348259">
        <id>Q96EZ8</id>
        <label>MCRS1</label>
    </interactant>
    <organismsDiffer>false</organismsDiffer>
    <experiments>3</experiments>
</comment>
<comment type="interaction">
    <interactant intactId="EBI-747693">
        <id>P41227</id>
    </interactant>
    <interactant intactId="EBI-398437">
        <id>O15151</id>
        <label>MDM4</label>
    </interactant>
    <organismsDiffer>false</organismsDiffer>
    <experiments>3</experiments>
</comment>
<comment type="interaction">
    <interactant intactId="EBI-747693">
        <id>P41227</id>
    </interactant>
    <interactant intactId="EBI-748397">
        <id>P50222</id>
        <label>MEOX2</label>
    </interactant>
    <organismsDiffer>false</organismsDiffer>
    <experiments>3</experiments>
</comment>
<comment type="interaction">
    <interactant intactId="EBI-747693">
        <id>P41227</id>
    </interactant>
    <interactant intactId="EBI-16439278">
        <id>Q6FHY5</id>
        <label>MEOX2</label>
    </interactant>
    <organismsDiffer>false</organismsDiffer>
    <experiments>3</experiments>
</comment>
<comment type="interaction">
    <interactant intactId="EBI-747693">
        <id>P41227</id>
    </interactant>
    <interactant intactId="EBI-373524">
        <id>Q9UHC7</id>
        <label>MKRN1</label>
    </interactant>
    <organismsDiffer>false</organismsDiffer>
    <experiments>5</experiments>
</comment>
<comment type="interaction">
    <interactant intactId="EBI-747693">
        <id>P41227</id>
    </interactant>
    <interactant intactId="EBI-2371859">
        <id>P82912</id>
        <label>MRPS11</label>
    </interactant>
    <organismsDiffer>false</organismsDiffer>
    <experiments>3</experiments>
</comment>
<comment type="interaction">
    <interactant intactId="EBI-747693">
        <id>P41227</id>
    </interactant>
    <interactant intactId="EBI-1042540">
        <id>Q9BXJ9</id>
        <label>NAA15</label>
    </interactant>
    <organismsDiffer>false</organismsDiffer>
    <experiments>10</experiments>
</comment>
<comment type="interaction">
    <interactant intactId="EBI-747693">
        <id>P41227</id>
    </interactant>
    <interactant intactId="EBI-2561139">
        <id>Q6N069</id>
        <label>NAA16</label>
    </interactant>
    <organismsDiffer>false</organismsDiffer>
    <experiments>5</experiments>
</comment>
<comment type="interaction">
    <interactant intactId="EBI-747693">
        <id>P41227</id>
    </interactant>
    <interactant intactId="EBI-1052523">
        <id>Q9GZZ1</id>
        <label>NAA50</label>
    </interactant>
    <organismsDiffer>false</organismsDiffer>
    <experiments>6</experiments>
</comment>
<comment type="interaction">
    <interactant intactId="EBI-747693">
        <id>P41227</id>
    </interactant>
    <interactant intactId="EBI-2007911">
        <id>Q16236</id>
        <label>NFE2L2</label>
    </interactant>
    <organismsDiffer>false</organismsDiffer>
    <experiments>4</experiments>
</comment>
<comment type="interaction">
    <interactant intactId="EBI-747693">
        <id>P41227</id>
    </interactant>
    <interactant intactId="EBI-12025760">
        <id>Q86UR1-2</id>
        <label>NOXA1</label>
    </interactant>
    <organismsDiffer>false</organismsDiffer>
    <experiments>6</experiments>
</comment>
<comment type="interaction">
    <interactant intactId="EBI-747693">
        <id>P41227</id>
    </interactant>
    <interactant intactId="EBI-1105124">
        <id>Q5VU43</id>
        <label>PDE4DIP</label>
    </interactant>
    <organismsDiffer>false</organismsDiffer>
    <experiments>4</experiments>
</comment>
<comment type="interaction">
    <interactant intactId="EBI-747693">
        <id>P41227</id>
    </interactant>
    <interactant intactId="EBI-9640281">
        <id>Q5VU43-2</id>
        <label>PDE4DIP</label>
    </interactant>
    <organismsDiffer>false</organismsDiffer>
    <experiments>3</experiments>
</comment>
<comment type="interaction">
    <interactant intactId="EBI-747693">
        <id>P41227</id>
    </interactant>
    <interactant intactId="EBI-9090282">
        <id>P27986-2</id>
        <label>PIK3R1</label>
    </interactant>
    <organismsDiffer>false</organismsDiffer>
    <experiments>3</experiments>
</comment>
<comment type="interaction">
    <interactant intactId="EBI-747693">
        <id>P41227</id>
    </interactant>
    <interactant intactId="EBI-750734">
        <id>Q9NRY6</id>
        <label>PLSCR3</label>
    </interactant>
    <organismsDiffer>false</organismsDiffer>
    <experiments>3</experiments>
</comment>
<comment type="interaction">
    <interactant intactId="EBI-747693">
        <id>P41227</id>
    </interactant>
    <interactant intactId="EBI-2479826">
        <id>Q9Y5P8</id>
        <label>PPP2R3B</label>
    </interactant>
    <organismsDiffer>false</organismsDiffer>
    <experiments>3</experiments>
</comment>
<comment type="interaction">
    <interactant intactId="EBI-747693">
        <id>P41227</id>
    </interactant>
    <interactant intactId="EBI-747844">
        <id>Q96QF0</id>
        <label>RAB3IP</label>
    </interactant>
    <organismsDiffer>false</organismsDiffer>
    <experiments>3</experiments>
</comment>
<comment type="interaction">
    <interactant intactId="EBI-747693">
        <id>P41227</id>
    </interactant>
    <interactant intactId="EBI-11984839">
        <id>Q96QF0-7</id>
        <label>RAB3IP</label>
    </interactant>
    <organismsDiffer>false</organismsDiffer>
    <experiments>3</experiments>
</comment>
<comment type="interaction">
    <interactant intactId="EBI-747693">
        <id>P41227</id>
    </interactant>
    <interactant intactId="EBI-413628">
        <id>P63000</id>
        <label>RAC1</label>
    </interactant>
    <organismsDiffer>false</organismsDiffer>
    <experiments>3</experiments>
</comment>
<comment type="interaction">
    <interactant intactId="EBI-747693">
        <id>P41227</id>
    </interactant>
    <interactant intactId="EBI-2340624">
        <id>Q9BYM8</id>
        <label>RBCK1</label>
    </interactant>
    <organismsDiffer>false</organismsDiffer>
    <experiments>3</experiments>
</comment>
<comment type="interaction">
    <interactant intactId="EBI-747693">
        <id>P41227</id>
    </interactant>
    <interactant intactId="EBI-746283">
        <id>Q96D15</id>
        <label>RCN3</label>
    </interactant>
    <organismsDiffer>false</organismsDiffer>
    <experiments>3</experiments>
</comment>
<comment type="interaction">
    <interactant intactId="EBI-747693">
        <id>P41227</id>
    </interactant>
    <interactant intactId="EBI-12906594">
        <id>O15034-2</id>
        <label>RIMBP2</label>
    </interactant>
    <organismsDiffer>false</organismsDiffer>
    <experiments>3</experiments>
</comment>
<comment type="interaction">
    <interactant intactId="EBI-747693">
        <id>P41227</id>
    </interactant>
    <interactant intactId="EBI-11017428">
        <id>Q13214-2</id>
        <label>SEMA3B</label>
    </interactant>
    <organismsDiffer>false</organismsDiffer>
    <experiments>3</experiments>
</comment>
<comment type="interaction">
    <interactant intactId="EBI-747693">
        <id>P41227</id>
    </interactant>
    <interactant intactId="EBI-2481535">
        <id>Q8WV41</id>
        <label>SNX33</label>
    </interactant>
    <organismsDiffer>false</organismsDiffer>
    <experiments>3</experiments>
</comment>
<comment type="interaction">
    <interactant intactId="EBI-747693">
        <id>P41227</id>
    </interactant>
    <interactant intactId="EBI-2212028">
        <id>Q9Y2D8</id>
        <label>SSX2IP</label>
    </interactant>
    <organismsDiffer>false</organismsDiffer>
    <experiments>3</experiments>
</comment>
<comment type="interaction">
    <interactant intactId="EBI-747693">
        <id>P41227</id>
    </interactant>
    <interactant intactId="EBI-6658013">
        <id>Q5H9L4</id>
        <label>TAF7L</label>
    </interactant>
    <organismsDiffer>false</organismsDiffer>
    <experiments>3</experiments>
</comment>
<comment type="interaction">
    <interactant intactId="EBI-747693">
        <id>P41227</id>
    </interactant>
    <interactant intactId="EBI-2559824">
        <id>Q7Z6J9</id>
        <label>TSEN54</label>
    </interactant>
    <organismsDiffer>false</organismsDiffer>
    <experiments>3</experiments>
</comment>
<comment type="interaction">
    <interactant intactId="EBI-747693">
        <id>P41227</id>
    </interactant>
    <interactant intactId="EBI-10176632">
        <id>O43829</id>
        <label>ZBTB14</label>
    </interactant>
    <organismsDiffer>false</organismsDiffer>
    <experiments>6</experiments>
</comment>
<comment type="interaction">
    <interactant intactId="EBI-747693">
        <id>P41227</id>
    </interactant>
    <interactant intactId="EBI-751960">
        <id>O95125</id>
        <label>ZNF202</label>
    </interactant>
    <organismsDiffer>false</organismsDiffer>
    <experiments>3</experiments>
</comment>
<comment type="interaction">
    <interactant intactId="EBI-747693">
        <id>P41227</id>
    </interactant>
    <interactant intactId="EBI-625509">
        <id>Q8N720</id>
        <label>ZNF655</label>
    </interactant>
    <organismsDiffer>false</organismsDiffer>
    <experiments>3</experiments>
</comment>
<comment type="interaction">
    <interactant intactId="EBI-747693">
        <id>P41227</id>
    </interactant>
    <interactant intactId="EBI-3649585">
        <id>O55043</id>
        <label>Arhgef7</label>
    </interactant>
    <organismsDiffer>true</organismsDiffer>
    <experiments>3</experiments>
</comment>
<comment type="subcellular location">
    <subcellularLocation>
        <location evidence="3 13 14">Cytoplasm</location>
    </subcellularLocation>
    <subcellularLocation>
        <location evidence="3 4 14">Nucleus</location>
    </subcellularLocation>
    <text evidence="4">Also present in the free cytosolic and cytoskeleton-bound polysomes.</text>
</comment>
<comment type="alternative products">
    <event type="alternative splicing"/>
    <isoform>
        <id>P41227-1</id>
        <name>1</name>
        <sequence type="displayed"/>
    </isoform>
    <isoform>
        <id>P41227-2</id>
        <name>2</name>
        <sequence type="described" ref="VSP_046205 VSP_046206"/>
    </isoform>
</comment>
<comment type="tissue specificity">
    <text evidence="3">Ubiquitous.</text>
</comment>
<comment type="PTM">
    <text>Cleaved by caspases during apoptosis.</text>
</comment>
<comment type="PTM">
    <text evidence="7">Phosphorylation by IKBKB/IKKB at Ser-209 promotes its proteasome-mediated degradation.</text>
</comment>
<comment type="PTM">
    <text evidence="17">Autoacetylated at Lys-136 which stimulates its catalytic activity.</text>
</comment>
<comment type="disease" evidence="11 13 15 19">
    <disease id="DI-03266">
        <name>N-terminal acetyltransferase deficiency</name>
        <acronym>NATD</acronym>
        <description>An enzymatic deficiency resulting in postnatal growth failure with severe delays and dysmorphic features. It is clinically characterized by wrinkled forehead, prominent eyes, widely opened anterior and posterior fontanels, downsloping palpebral fissures, thickened lids, large ears, flared nares, hypoplastic alae, short columella, protruding upper lip, and microretrognathia. There are also delayed closing of fontanels and broad great toes. Skin is characterized by redundancy or laxity with minimal subcutaneous fat, cutaneous capillary malformations, and very fine hair and eyebrows. Death results from cardiogenic shock following arrhythmia.</description>
        <dbReference type="MIM" id="300855"/>
    </disease>
    <text>The disease is caused by variants affecting the gene represented in this entry.</text>
</comment>
<comment type="disease" evidence="12">
    <disease id="DI-04013">
        <name>Microphthalmia, syndromic, 1</name>
        <acronym>MCOPS1</acronym>
        <description>A rare syndrome defined by the canonical features of unilateral or bilateral microphthalmia or anophthalmia and defects in the skeletal and genitourinary systems. Microphthalmia is a disorder of eye formation, ranging from small size of a single eye to complete bilateral absence of ocular tissues (anophthalmia). In many cases, microphthalmia/anophthalmia occurs in association with syndromes that include non-ocular abnormalities. Anomalies of the digits, teeth, and ears are hallmarks of MCOPS1. Intellectual disability ranges from mild to severe, with self-mutilating behaviors and seizures in severely affected MCOPS1 individuals.</description>
        <dbReference type="MIM" id="309800"/>
    </disease>
    <text>The disease is caused by variants affecting the gene represented in this entry.</text>
</comment>
<comment type="similarity">
    <text evidence="22">Belongs to the acetyltransferase family. ARD1 subfamily.</text>
</comment>
<name>NAA10_HUMAN</name>